<dbReference type="EC" id="2.3.3.9" evidence="1"/>
<dbReference type="EMBL" id="Y11998">
    <property type="protein sequence ID" value="CAA72726.1"/>
    <property type="molecule type" value="Genomic_DNA"/>
</dbReference>
<dbReference type="RefSeq" id="WP_069077133.1">
    <property type="nucleotide sequence ID" value="NZ_JBHFFJ010000102.1"/>
</dbReference>
<dbReference type="SMR" id="O05137"/>
<dbReference type="eggNOG" id="COG2225">
    <property type="taxonomic scope" value="Bacteria"/>
</dbReference>
<dbReference type="OrthoDB" id="9762054at2"/>
<dbReference type="UniPathway" id="UPA00703">
    <property type="reaction ID" value="UER00720"/>
</dbReference>
<dbReference type="GO" id="GO:0005829">
    <property type="term" value="C:cytosol"/>
    <property type="evidence" value="ECO:0007669"/>
    <property type="project" value="TreeGrafter"/>
</dbReference>
<dbReference type="GO" id="GO:0000287">
    <property type="term" value="F:magnesium ion binding"/>
    <property type="evidence" value="ECO:0007669"/>
    <property type="project" value="TreeGrafter"/>
</dbReference>
<dbReference type="GO" id="GO:0004474">
    <property type="term" value="F:malate synthase activity"/>
    <property type="evidence" value="ECO:0007669"/>
    <property type="project" value="UniProtKB-UniRule"/>
</dbReference>
<dbReference type="GO" id="GO:0009436">
    <property type="term" value="P:glyoxylate catabolic process"/>
    <property type="evidence" value="ECO:0007669"/>
    <property type="project" value="TreeGrafter"/>
</dbReference>
<dbReference type="GO" id="GO:0006097">
    <property type="term" value="P:glyoxylate cycle"/>
    <property type="evidence" value="ECO:0007669"/>
    <property type="project" value="UniProtKB-UniRule"/>
</dbReference>
<dbReference type="GO" id="GO:0006099">
    <property type="term" value="P:tricarboxylic acid cycle"/>
    <property type="evidence" value="ECO:0007669"/>
    <property type="project" value="UniProtKB-KW"/>
</dbReference>
<dbReference type="CDD" id="cd00728">
    <property type="entry name" value="malate_synt_G"/>
    <property type="match status" value="1"/>
</dbReference>
<dbReference type="FunFam" id="3.20.20.360:FF:000002">
    <property type="entry name" value="Malate synthase G"/>
    <property type="match status" value="1"/>
</dbReference>
<dbReference type="Gene3D" id="3.20.20.360">
    <property type="entry name" value="Malate synthase, domain 3"/>
    <property type="match status" value="2"/>
</dbReference>
<dbReference type="Gene3D" id="1.20.1220.12">
    <property type="entry name" value="Malate synthase, domain III"/>
    <property type="match status" value="1"/>
</dbReference>
<dbReference type="HAMAP" id="MF_00641">
    <property type="entry name" value="Malate_synth_G"/>
    <property type="match status" value="1"/>
</dbReference>
<dbReference type="InterPro" id="IPR044856">
    <property type="entry name" value="Malate_synth_C_sf"/>
</dbReference>
<dbReference type="InterPro" id="IPR011076">
    <property type="entry name" value="Malate_synth_sf"/>
</dbReference>
<dbReference type="InterPro" id="IPR001465">
    <property type="entry name" value="Malate_synthase_TIM"/>
</dbReference>
<dbReference type="InterPro" id="IPR006253">
    <property type="entry name" value="Malate_synthG"/>
</dbReference>
<dbReference type="InterPro" id="IPR048355">
    <property type="entry name" value="MS_C"/>
</dbReference>
<dbReference type="InterPro" id="IPR048356">
    <property type="entry name" value="MS_N"/>
</dbReference>
<dbReference type="InterPro" id="IPR046363">
    <property type="entry name" value="MS_N_TIM-barrel_dom"/>
</dbReference>
<dbReference type="InterPro" id="IPR048357">
    <property type="entry name" value="MSG_insertion"/>
</dbReference>
<dbReference type="NCBIfam" id="TIGR01345">
    <property type="entry name" value="malate_syn_G"/>
    <property type="match status" value="1"/>
</dbReference>
<dbReference type="NCBIfam" id="NF002825">
    <property type="entry name" value="PRK02999.1"/>
    <property type="match status" value="1"/>
</dbReference>
<dbReference type="PANTHER" id="PTHR42739">
    <property type="entry name" value="MALATE SYNTHASE G"/>
    <property type="match status" value="1"/>
</dbReference>
<dbReference type="PANTHER" id="PTHR42739:SF1">
    <property type="entry name" value="MALATE SYNTHASE G"/>
    <property type="match status" value="1"/>
</dbReference>
<dbReference type="Pfam" id="PF20659">
    <property type="entry name" value="MS_C"/>
    <property type="match status" value="1"/>
</dbReference>
<dbReference type="Pfam" id="PF20656">
    <property type="entry name" value="MS_N"/>
    <property type="match status" value="1"/>
</dbReference>
<dbReference type="Pfam" id="PF01274">
    <property type="entry name" value="MS_TIM-barrel"/>
    <property type="match status" value="1"/>
</dbReference>
<dbReference type="Pfam" id="PF20658">
    <property type="entry name" value="MSG_insertion"/>
    <property type="match status" value="1"/>
</dbReference>
<dbReference type="SUPFAM" id="SSF51645">
    <property type="entry name" value="Malate synthase G"/>
    <property type="match status" value="1"/>
</dbReference>
<evidence type="ECO:0000255" key="1">
    <source>
        <dbReference type="HAMAP-Rule" id="MF_00641"/>
    </source>
</evidence>
<feature type="chain" id="PRO_0000166892" description="Malate synthase G">
    <location>
        <begin position="1"/>
        <end position="725"/>
    </location>
</feature>
<feature type="active site" description="Proton acceptor" evidence="1">
    <location>
        <position position="340"/>
    </location>
</feature>
<feature type="active site" description="Proton donor" evidence="1">
    <location>
        <position position="631"/>
    </location>
</feature>
<feature type="binding site" evidence="1">
    <location>
        <position position="118"/>
    </location>
    <ligand>
        <name>acetyl-CoA</name>
        <dbReference type="ChEBI" id="CHEBI:57288"/>
    </ligand>
</feature>
<feature type="binding site" evidence="1">
    <location>
        <begin position="125"/>
        <end position="126"/>
    </location>
    <ligand>
        <name>acetyl-CoA</name>
        <dbReference type="ChEBI" id="CHEBI:57288"/>
    </ligand>
</feature>
<feature type="binding site" evidence="1">
    <location>
        <position position="276"/>
    </location>
    <ligand>
        <name>acetyl-CoA</name>
        <dbReference type="ChEBI" id="CHEBI:57288"/>
    </ligand>
</feature>
<feature type="binding site" evidence="1">
    <location>
        <position position="313"/>
    </location>
    <ligand>
        <name>acetyl-CoA</name>
        <dbReference type="ChEBI" id="CHEBI:57288"/>
    </ligand>
</feature>
<feature type="binding site" evidence="1">
    <location>
        <position position="340"/>
    </location>
    <ligand>
        <name>glyoxylate</name>
        <dbReference type="ChEBI" id="CHEBI:36655"/>
    </ligand>
</feature>
<feature type="binding site" evidence="1">
    <location>
        <position position="432"/>
    </location>
    <ligand>
        <name>glyoxylate</name>
        <dbReference type="ChEBI" id="CHEBI:36655"/>
    </ligand>
</feature>
<feature type="binding site" evidence="1">
    <location>
        <position position="432"/>
    </location>
    <ligand>
        <name>Mg(2+)</name>
        <dbReference type="ChEBI" id="CHEBI:18420"/>
    </ligand>
</feature>
<feature type="binding site" evidence="1">
    <location>
        <begin position="457"/>
        <end position="460"/>
    </location>
    <ligand>
        <name>glyoxylate</name>
        <dbReference type="ChEBI" id="CHEBI:36655"/>
    </ligand>
</feature>
<feature type="binding site" evidence="1">
    <location>
        <position position="460"/>
    </location>
    <ligand>
        <name>Mg(2+)</name>
        <dbReference type="ChEBI" id="CHEBI:18420"/>
    </ligand>
</feature>
<feature type="binding site" evidence="1">
    <location>
        <position position="541"/>
    </location>
    <ligand>
        <name>acetyl-CoA</name>
        <dbReference type="ChEBI" id="CHEBI:57288"/>
    </ligand>
</feature>
<feature type="modified residue" description="Cysteine sulfenic acid (-SOH)" evidence="1">
    <location>
        <position position="617"/>
    </location>
</feature>
<reference key="1">
    <citation type="submission" date="1997-03" db="EMBL/GenBank/DDBJ databases">
        <title>A functional glyoxylate bypass is mandatory for utilization of alkanes by Pseudomonas fluorescens.</title>
        <authorList>
            <person name="Artiguenave F.M."/>
            <person name="Delecu M."/>
            <person name="Vilagines R."/>
            <person name="Danglot C."/>
        </authorList>
    </citation>
    <scope>NUCLEOTIDE SEQUENCE [GENOMIC DNA]</scope>
    <source>
        <strain>L6.5</strain>
    </source>
</reference>
<name>MASZ_PSEFL</name>
<proteinExistence type="inferred from homology"/>
<accession>O05137</accession>
<protein>
    <recommendedName>
        <fullName evidence="1">Malate synthase G</fullName>
        <ecNumber evidence="1">2.3.3.9</ecNumber>
    </recommendedName>
</protein>
<keyword id="KW-0963">Cytoplasm</keyword>
<keyword id="KW-0329">Glyoxylate bypass</keyword>
<keyword id="KW-0460">Magnesium</keyword>
<keyword id="KW-0479">Metal-binding</keyword>
<keyword id="KW-0558">Oxidation</keyword>
<keyword id="KW-0808">Transferase</keyword>
<keyword id="KW-0816">Tricarboxylic acid cycle</keyword>
<gene>
    <name evidence="1" type="primary">glcB</name>
    <name type="synonym">FC2.4</name>
</gene>
<sequence>MTEHVQVGGLQVAKVLFDFVNNEAIPGTGITADQFWAGADKVIHDLAPKNKALLAKRDDFQARIDTWHQTHAGQAHDPVAYKAFLQDIGYLLPEAADFQASTQNVDDEIARMAGPQLVVPVMNARFALNASNARWGSLYDALYGTDAISEADGAEKGKGYNKVRGDKVIAFARAFLDEAAPLSAGSHVDSTGYKIADGKLIVSLKGGSNSGLRDDAQLIGFQGPAAQPIAILLKHNGLHFEIQIDASTPVGQTDAAGVKDVLMEAALTTIMDCEDSVAAVDADDKVVIYRNWLGLMKGDLAEEVAKGGKTFTRTMNPDRVYTGVDGQDVTLHGRSLLFVRNVGHLMTIDAILDKAGNEVPEGILDGLLTSLAAIHSLNGNSSRKNSRTGSVYIVKPKMHGPEEAAFTNELFGRIEDVLNLPRNTLKVGIMDEERRTTVNLKACIKAASERVVFINTGFLDRTGDEIHTSMEAGAMVRKAAMKTEKWIGAYENWNVDIGLSTGLQGRAQIGKGMWAMPDLMAAMLEQKIAHPLAGANTAWVPSPTAAALHALHYHKVDVFARQAELAKRERASVDDILTIPLAKNTDWSEEEIRNELDNNAQGILGYVVRWIDQGVGCSKVPDINDVGLMEDRATLRISSQHIANWLRHGVVTQDQVMESLKRMAPVVDRQNAGDALYRPLAPDFDSNIAFQAAVELVIEGTKQPNGYTEPVLHRKRREFKAKNGL</sequence>
<organism>
    <name type="scientific">Pseudomonas fluorescens</name>
    <dbReference type="NCBI Taxonomy" id="294"/>
    <lineage>
        <taxon>Bacteria</taxon>
        <taxon>Pseudomonadati</taxon>
        <taxon>Pseudomonadota</taxon>
        <taxon>Gammaproteobacteria</taxon>
        <taxon>Pseudomonadales</taxon>
        <taxon>Pseudomonadaceae</taxon>
        <taxon>Pseudomonas</taxon>
    </lineage>
</organism>
<comment type="function">
    <text evidence="1">Involved in the glycolate utilization. Catalyzes the condensation and subsequent hydrolysis of acetyl-coenzyme A (acetyl-CoA) and glyoxylate to form malate and CoA.</text>
</comment>
<comment type="catalytic activity">
    <reaction evidence="1">
        <text>glyoxylate + acetyl-CoA + H2O = (S)-malate + CoA + H(+)</text>
        <dbReference type="Rhea" id="RHEA:18181"/>
        <dbReference type="ChEBI" id="CHEBI:15377"/>
        <dbReference type="ChEBI" id="CHEBI:15378"/>
        <dbReference type="ChEBI" id="CHEBI:15589"/>
        <dbReference type="ChEBI" id="CHEBI:36655"/>
        <dbReference type="ChEBI" id="CHEBI:57287"/>
        <dbReference type="ChEBI" id="CHEBI:57288"/>
        <dbReference type="EC" id="2.3.3.9"/>
    </reaction>
</comment>
<comment type="cofactor">
    <cofactor evidence="1">
        <name>Mg(2+)</name>
        <dbReference type="ChEBI" id="CHEBI:18420"/>
    </cofactor>
</comment>
<comment type="pathway">
    <text evidence="1">Carbohydrate metabolism; glyoxylate cycle; (S)-malate from isocitrate: step 2/2.</text>
</comment>
<comment type="subunit">
    <text evidence="1">Monomer.</text>
</comment>
<comment type="subcellular location">
    <subcellularLocation>
        <location evidence="1">Cytoplasm</location>
    </subcellularLocation>
</comment>
<comment type="similarity">
    <text evidence="1">Belongs to the malate synthase family. GlcB subfamily.</text>
</comment>